<sequence length="353" mass="39084">MIDADRLITAAGGRDRDEQMDRAIRPLSLADYIGQPTVREQMELFIQAARGRNEALDHTLIFGPPGLGKTTLANIIAQEMGVSIKSTSGPVLERPGDLAAILTNLEPNDVLFIDEIHRLSPIVEEVLYPAMEDFQLDIMIGEGPAARSIKLDLPPFTLVGATTRAGMLTNPLRDRFGIVQRLEFYNIADLSTIVSRSAGILGLVIEPQGAFEIARRARGTPRIANRLLRRVRDFAEVRGNGQITRQTADKALNLLDVDEHGFDHQDRRLLLTMIEKFDGGPVGVDSLAAAISEERHTIEDVLEPYLIQQGYIMRTPRGRVVTRHAYLHFGLNIPSRMGEMPVVDDVVDDPADL</sequence>
<feature type="chain" id="PRO_0000235393" description="Holliday junction branch migration complex subunit RuvB">
    <location>
        <begin position="1"/>
        <end position="353"/>
    </location>
</feature>
<feature type="region of interest" description="Large ATPase domain (RuvB-L)" evidence="1">
    <location>
        <begin position="4"/>
        <end position="185"/>
    </location>
</feature>
<feature type="region of interest" description="Small ATPAse domain (RuvB-S)" evidence="1">
    <location>
        <begin position="186"/>
        <end position="256"/>
    </location>
</feature>
<feature type="region of interest" description="Head domain (RuvB-H)" evidence="1">
    <location>
        <begin position="259"/>
        <end position="353"/>
    </location>
</feature>
<feature type="binding site" evidence="1">
    <location>
        <position position="24"/>
    </location>
    <ligand>
        <name>ATP</name>
        <dbReference type="ChEBI" id="CHEBI:30616"/>
    </ligand>
</feature>
<feature type="binding site" evidence="1">
    <location>
        <position position="25"/>
    </location>
    <ligand>
        <name>ATP</name>
        <dbReference type="ChEBI" id="CHEBI:30616"/>
    </ligand>
</feature>
<feature type="binding site" evidence="1">
    <location>
        <position position="66"/>
    </location>
    <ligand>
        <name>ATP</name>
        <dbReference type="ChEBI" id="CHEBI:30616"/>
    </ligand>
</feature>
<feature type="binding site" evidence="1">
    <location>
        <position position="69"/>
    </location>
    <ligand>
        <name>ATP</name>
        <dbReference type="ChEBI" id="CHEBI:30616"/>
    </ligand>
</feature>
<feature type="binding site" evidence="1">
    <location>
        <position position="70"/>
    </location>
    <ligand>
        <name>ATP</name>
        <dbReference type="ChEBI" id="CHEBI:30616"/>
    </ligand>
</feature>
<feature type="binding site" evidence="1">
    <location>
        <position position="70"/>
    </location>
    <ligand>
        <name>Mg(2+)</name>
        <dbReference type="ChEBI" id="CHEBI:18420"/>
    </ligand>
</feature>
<feature type="binding site" evidence="1">
    <location>
        <position position="71"/>
    </location>
    <ligand>
        <name>ATP</name>
        <dbReference type="ChEBI" id="CHEBI:30616"/>
    </ligand>
</feature>
<feature type="binding site" evidence="1">
    <location>
        <begin position="132"/>
        <end position="134"/>
    </location>
    <ligand>
        <name>ATP</name>
        <dbReference type="ChEBI" id="CHEBI:30616"/>
    </ligand>
</feature>
<feature type="binding site" evidence="1">
    <location>
        <position position="175"/>
    </location>
    <ligand>
        <name>ATP</name>
        <dbReference type="ChEBI" id="CHEBI:30616"/>
    </ligand>
</feature>
<feature type="binding site" evidence="1">
    <location>
        <position position="185"/>
    </location>
    <ligand>
        <name>ATP</name>
        <dbReference type="ChEBI" id="CHEBI:30616"/>
    </ligand>
</feature>
<feature type="binding site" evidence="1">
    <location>
        <position position="222"/>
    </location>
    <ligand>
        <name>ATP</name>
        <dbReference type="ChEBI" id="CHEBI:30616"/>
    </ligand>
</feature>
<feature type="binding site" evidence="1">
    <location>
        <position position="295"/>
    </location>
    <ligand>
        <name>DNA</name>
        <dbReference type="ChEBI" id="CHEBI:16991"/>
    </ligand>
</feature>
<feature type="binding site" evidence="1">
    <location>
        <position position="314"/>
    </location>
    <ligand>
        <name>DNA</name>
        <dbReference type="ChEBI" id="CHEBI:16991"/>
    </ligand>
</feature>
<feature type="binding site" evidence="1">
    <location>
        <position position="319"/>
    </location>
    <ligand>
        <name>DNA</name>
        <dbReference type="ChEBI" id="CHEBI:16991"/>
    </ligand>
</feature>
<reference key="1">
    <citation type="journal article" date="2005" name="J. Bacteriol.">
        <title>Whole-genome sequence analysis of Pseudomonas syringae pv. phaseolicola 1448A reveals divergence among pathovars in genes involved in virulence and transposition.</title>
        <authorList>
            <person name="Joardar V."/>
            <person name="Lindeberg M."/>
            <person name="Jackson R.W."/>
            <person name="Selengut J."/>
            <person name="Dodson R."/>
            <person name="Brinkac L.M."/>
            <person name="Daugherty S.C."/>
            <person name="DeBoy R.T."/>
            <person name="Durkin A.S."/>
            <person name="Gwinn Giglio M."/>
            <person name="Madupu R."/>
            <person name="Nelson W.C."/>
            <person name="Rosovitz M.J."/>
            <person name="Sullivan S.A."/>
            <person name="Crabtree J."/>
            <person name="Creasy T."/>
            <person name="Davidsen T.M."/>
            <person name="Haft D.H."/>
            <person name="Zafar N."/>
            <person name="Zhou L."/>
            <person name="Halpin R."/>
            <person name="Holley T."/>
            <person name="Khouri H.M."/>
            <person name="Feldblyum T.V."/>
            <person name="White O."/>
            <person name="Fraser C.M."/>
            <person name="Chatterjee A.K."/>
            <person name="Cartinhour S."/>
            <person name="Schneider D."/>
            <person name="Mansfield J.W."/>
            <person name="Collmer A."/>
            <person name="Buell R."/>
        </authorList>
    </citation>
    <scope>NUCLEOTIDE SEQUENCE [LARGE SCALE GENOMIC DNA]</scope>
    <source>
        <strain>1448A / Race 6</strain>
    </source>
</reference>
<protein>
    <recommendedName>
        <fullName evidence="1">Holliday junction branch migration complex subunit RuvB</fullName>
        <ecNumber evidence="1">3.6.4.-</ecNumber>
    </recommendedName>
</protein>
<gene>
    <name evidence="1" type="primary">ruvB</name>
    <name type="ordered locus">PSPPH_3772</name>
</gene>
<keyword id="KW-0067">ATP-binding</keyword>
<keyword id="KW-0963">Cytoplasm</keyword>
<keyword id="KW-0227">DNA damage</keyword>
<keyword id="KW-0233">DNA recombination</keyword>
<keyword id="KW-0234">DNA repair</keyword>
<keyword id="KW-0238">DNA-binding</keyword>
<keyword id="KW-0378">Hydrolase</keyword>
<keyword id="KW-0547">Nucleotide-binding</keyword>
<dbReference type="EC" id="3.6.4.-" evidence="1"/>
<dbReference type="EMBL" id="CP000058">
    <property type="protein sequence ID" value="AAZ36320.1"/>
    <property type="molecule type" value="Genomic_DNA"/>
</dbReference>
<dbReference type="RefSeq" id="WP_004657900.1">
    <property type="nucleotide sequence ID" value="NC_005773.3"/>
</dbReference>
<dbReference type="SMR" id="Q48FC5"/>
<dbReference type="KEGG" id="psp:PSPPH_3772"/>
<dbReference type="eggNOG" id="COG2255">
    <property type="taxonomic scope" value="Bacteria"/>
</dbReference>
<dbReference type="HOGENOM" id="CLU_055599_1_0_6"/>
<dbReference type="Proteomes" id="UP000000551">
    <property type="component" value="Chromosome"/>
</dbReference>
<dbReference type="GO" id="GO:0005737">
    <property type="term" value="C:cytoplasm"/>
    <property type="evidence" value="ECO:0007669"/>
    <property type="project" value="UniProtKB-SubCell"/>
</dbReference>
<dbReference type="GO" id="GO:0048476">
    <property type="term" value="C:Holliday junction resolvase complex"/>
    <property type="evidence" value="ECO:0007669"/>
    <property type="project" value="UniProtKB-UniRule"/>
</dbReference>
<dbReference type="GO" id="GO:0005524">
    <property type="term" value="F:ATP binding"/>
    <property type="evidence" value="ECO:0007669"/>
    <property type="project" value="UniProtKB-UniRule"/>
</dbReference>
<dbReference type="GO" id="GO:0016887">
    <property type="term" value="F:ATP hydrolysis activity"/>
    <property type="evidence" value="ECO:0007669"/>
    <property type="project" value="InterPro"/>
</dbReference>
<dbReference type="GO" id="GO:0000400">
    <property type="term" value="F:four-way junction DNA binding"/>
    <property type="evidence" value="ECO:0007669"/>
    <property type="project" value="UniProtKB-UniRule"/>
</dbReference>
<dbReference type="GO" id="GO:0009378">
    <property type="term" value="F:four-way junction helicase activity"/>
    <property type="evidence" value="ECO:0007669"/>
    <property type="project" value="InterPro"/>
</dbReference>
<dbReference type="GO" id="GO:0006310">
    <property type="term" value="P:DNA recombination"/>
    <property type="evidence" value="ECO:0007669"/>
    <property type="project" value="UniProtKB-UniRule"/>
</dbReference>
<dbReference type="GO" id="GO:0006281">
    <property type="term" value="P:DNA repair"/>
    <property type="evidence" value="ECO:0007669"/>
    <property type="project" value="UniProtKB-UniRule"/>
</dbReference>
<dbReference type="CDD" id="cd00009">
    <property type="entry name" value="AAA"/>
    <property type="match status" value="1"/>
</dbReference>
<dbReference type="FunFam" id="1.10.10.10:FF:000086">
    <property type="entry name" value="Holliday junction ATP-dependent DNA helicase RuvB"/>
    <property type="match status" value="1"/>
</dbReference>
<dbReference type="FunFam" id="1.10.8.60:FF:000023">
    <property type="entry name" value="Holliday junction ATP-dependent DNA helicase RuvB"/>
    <property type="match status" value="1"/>
</dbReference>
<dbReference type="FunFam" id="3.40.50.300:FF:000073">
    <property type="entry name" value="Holliday junction ATP-dependent DNA helicase RuvB"/>
    <property type="match status" value="1"/>
</dbReference>
<dbReference type="Gene3D" id="1.10.8.60">
    <property type="match status" value="1"/>
</dbReference>
<dbReference type="Gene3D" id="3.40.50.300">
    <property type="entry name" value="P-loop containing nucleotide triphosphate hydrolases"/>
    <property type="match status" value="1"/>
</dbReference>
<dbReference type="Gene3D" id="1.10.10.10">
    <property type="entry name" value="Winged helix-like DNA-binding domain superfamily/Winged helix DNA-binding domain"/>
    <property type="match status" value="1"/>
</dbReference>
<dbReference type="HAMAP" id="MF_00016">
    <property type="entry name" value="DNA_HJ_migration_RuvB"/>
    <property type="match status" value="1"/>
</dbReference>
<dbReference type="InterPro" id="IPR003593">
    <property type="entry name" value="AAA+_ATPase"/>
</dbReference>
<dbReference type="InterPro" id="IPR041445">
    <property type="entry name" value="AAA_lid_4"/>
</dbReference>
<dbReference type="InterPro" id="IPR004605">
    <property type="entry name" value="DNA_helicase_Holl-junc_RuvB"/>
</dbReference>
<dbReference type="InterPro" id="IPR027417">
    <property type="entry name" value="P-loop_NTPase"/>
</dbReference>
<dbReference type="InterPro" id="IPR008824">
    <property type="entry name" value="RuvB-like_N"/>
</dbReference>
<dbReference type="InterPro" id="IPR008823">
    <property type="entry name" value="RuvB_C"/>
</dbReference>
<dbReference type="InterPro" id="IPR036388">
    <property type="entry name" value="WH-like_DNA-bd_sf"/>
</dbReference>
<dbReference type="InterPro" id="IPR036390">
    <property type="entry name" value="WH_DNA-bd_sf"/>
</dbReference>
<dbReference type="NCBIfam" id="NF000868">
    <property type="entry name" value="PRK00080.1"/>
    <property type="match status" value="1"/>
</dbReference>
<dbReference type="NCBIfam" id="TIGR00635">
    <property type="entry name" value="ruvB"/>
    <property type="match status" value="1"/>
</dbReference>
<dbReference type="PANTHER" id="PTHR42848">
    <property type="match status" value="1"/>
</dbReference>
<dbReference type="PANTHER" id="PTHR42848:SF1">
    <property type="entry name" value="HOLLIDAY JUNCTION BRANCH MIGRATION COMPLEX SUBUNIT RUVB"/>
    <property type="match status" value="1"/>
</dbReference>
<dbReference type="Pfam" id="PF17864">
    <property type="entry name" value="AAA_lid_4"/>
    <property type="match status" value="1"/>
</dbReference>
<dbReference type="Pfam" id="PF05491">
    <property type="entry name" value="RuvB_C"/>
    <property type="match status" value="1"/>
</dbReference>
<dbReference type="Pfam" id="PF05496">
    <property type="entry name" value="RuvB_N"/>
    <property type="match status" value="1"/>
</dbReference>
<dbReference type="SMART" id="SM00382">
    <property type="entry name" value="AAA"/>
    <property type="match status" value="1"/>
</dbReference>
<dbReference type="SUPFAM" id="SSF52540">
    <property type="entry name" value="P-loop containing nucleoside triphosphate hydrolases"/>
    <property type="match status" value="1"/>
</dbReference>
<dbReference type="SUPFAM" id="SSF46785">
    <property type="entry name" value="Winged helix' DNA-binding domain"/>
    <property type="match status" value="1"/>
</dbReference>
<accession>Q48FC5</accession>
<evidence type="ECO:0000255" key="1">
    <source>
        <dbReference type="HAMAP-Rule" id="MF_00016"/>
    </source>
</evidence>
<comment type="function">
    <text evidence="1">The RuvA-RuvB-RuvC complex processes Holliday junction (HJ) DNA during genetic recombination and DNA repair, while the RuvA-RuvB complex plays an important role in the rescue of blocked DNA replication forks via replication fork reversal (RFR). RuvA specifically binds to HJ cruciform DNA, conferring on it an open structure. The RuvB hexamer acts as an ATP-dependent pump, pulling dsDNA into and through the RuvAB complex. RuvB forms 2 homohexamers on either side of HJ DNA bound by 1 or 2 RuvA tetramers; 4 subunits per hexamer contact DNA at a time. Coordinated motions by a converter formed by DNA-disengaged RuvB subunits stimulates ATP hydrolysis and nucleotide exchange. Immobilization of the converter enables RuvB to convert the ATP-contained energy into a lever motion, pulling 2 nucleotides of DNA out of the RuvA tetramer per ATP hydrolyzed, thus driving DNA branch migration. The RuvB motors rotate together with the DNA substrate, which together with the progressing nucleotide cycle form the mechanistic basis for DNA recombination by continuous HJ branch migration. Branch migration allows RuvC to scan DNA until it finds its consensus sequence, where it cleaves and resolves cruciform DNA.</text>
</comment>
<comment type="catalytic activity">
    <reaction evidence="1">
        <text>ATP + H2O = ADP + phosphate + H(+)</text>
        <dbReference type="Rhea" id="RHEA:13065"/>
        <dbReference type="ChEBI" id="CHEBI:15377"/>
        <dbReference type="ChEBI" id="CHEBI:15378"/>
        <dbReference type="ChEBI" id="CHEBI:30616"/>
        <dbReference type="ChEBI" id="CHEBI:43474"/>
        <dbReference type="ChEBI" id="CHEBI:456216"/>
    </reaction>
</comment>
<comment type="subunit">
    <text evidence="1">Homohexamer. Forms an RuvA(8)-RuvB(12)-Holliday junction (HJ) complex. HJ DNA is sandwiched between 2 RuvA tetramers; dsDNA enters through RuvA and exits via RuvB. An RuvB hexamer assembles on each DNA strand where it exits the tetramer. Each RuvB hexamer is contacted by two RuvA subunits (via domain III) on 2 adjacent RuvB subunits; this complex drives branch migration. In the full resolvosome a probable DNA-RuvA(4)-RuvB(12)-RuvC(2) complex forms which resolves the HJ.</text>
</comment>
<comment type="subcellular location">
    <subcellularLocation>
        <location evidence="1">Cytoplasm</location>
    </subcellularLocation>
</comment>
<comment type="domain">
    <text evidence="1">Has 3 domains, the large (RuvB-L) and small ATPase (RuvB-S) domains and the C-terminal head (RuvB-H) domain. The head domain binds DNA, while the ATPase domains jointly bind ATP, ADP or are empty depending on the state of the subunit in the translocation cycle. During a single DNA translocation step the structure of each domain remains the same, but their relative positions change.</text>
</comment>
<comment type="similarity">
    <text evidence="1">Belongs to the RuvB family.</text>
</comment>
<organism>
    <name type="scientific">Pseudomonas savastanoi pv. phaseolicola (strain 1448A / Race 6)</name>
    <name type="common">Pseudomonas syringae pv. phaseolicola (strain 1448A / Race 6)</name>
    <dbReference type="NCBI Taxonomy" id="264730"/>
    <lineage>
        <taxon>Bacteria</taxon>
        <taxon>Pseudomonadati</taxon>
        <taxon>Pseudomonadota</taxon>
        <taxon>Gammaproteobacteria</taxon>
        <taxon>Pseudomonadales</taxon>
        <taxon>Pseudomonadaceae</taxon>
        <taxon>Pseudomonas</taxon>
    </lineage>
</organism>
<proteinExistence type="inferred from homology"/>
<name>RUVB_PSE14</name>